<gene>
    <name evidence="1" type="primary">hflD</name>
    <name type="ordered locus">KPN78578_11120</name>
    <name type="ORF">KPN_01140</name>
</gene>
<proteinExistence type="inferred from homology"/>
<reference key="1">
    <citation type="submission" date="2006-09" db="EMBL/GenBank/DDBJ databases">
        <authorList>
            <consortium name="The Klebsiella pneumonia Genome Sequencing Project"/>
            <person name="McClelland M."/>
            <person name="Sanderson E.K."/>
            <person name="Spieth J."/>
            <person name="Clifton W.S."/>
            <person name="Latreille P."/>
            <person name="Sabo A."/>
            <person name="Pepin K."/>
            <person name="Bhonagiri V."/>
            <person name="Porwollik S."/>
            <person name="Ali J."/>
            <person name="Wilson R.K."/>
        </authorList>
    </citation>
    <scope>NUCLEOTIDE SEQUENCE [LARGE SCALE GENOMIC DNA]</scope>
    <source>
        <strain>ATCC 700721 / MGH 78578</strain>
    </source>
</reference>
<protein>
    <recommendedName>
        <fullName evidence="1">High frequency lysogenization protein HflD homolog</fullName>
    </recommendedName>
</protein>
<name>HFLD_KLEP7</name>
<evidence type="ECO:0000255" key="1">
    <source>
        <dbReference type="HAMAP-Rule" id="MF_00695"/>
    </source>
</evidence>
<keyword id="KW-0997">Cell inner membrane</keyword>
<keyword id="KW-1003">Cell membrane</keyword>
<keyword id="KW-0963">Cytoplasm</keyword>
<keyword id="KW-0472">Membrane</keyword>
<dbReference type="EMBL" id="CP000647">
    <property type="protein sequence ID" value="ABR76573.1"/>
    <property type="molecule type" value="Genomic_DNA"/>
</dbReference>
<dbReference type="RefSeq" id="WP_004140557.1">
    <property type="nucleotide sequence ID" value="NC_009648.1"/>
</dbReference>
<dbReference type="SMR" id="A6T7K2"/>
<dbReference type="STRING" id="272620.KPN_01140"/>
<dbReference type="PaxDb" id="272620-KPN_01140"/>
<dbReference type="EnsemblBacteria" id="ABR76573">
    <property type="protein sequence ID" value="ABR76573"/>
    <property type="gene ID" value="KPN_01140"/>
</dbReference>
<dbReference type="GeneID" id="93273926"/>
<dbReference type="KEGG" id="kpn:KPN_01140"/>
<dbReference type="HOGENOM" id="CLU_098920_0_0_6"/>
<dbReference type="Proteomes" id="UP000000265">
    <property type="component" value="Chromosome"/>
</dbReference>
<dbReference type="GO" id="GO:0005737">
    <property type="term" value="C:cytoplasm"/>
    <property type="evidence" value="ECO:0007669"/>
    <property type="project" value="UniProtKB-SubCell"/>
</dbReference>
<dbReference type="GO" id="GO:0005886">
    <property type="term" value="C:plasma membrane"/>
    <property type="evidence" value="ECO:0007669"/>
    <property type="project" value="UniProtKB-SubCell"/>
</dbReference>
<dbReference type="FunFam" id="1.10.3890.10:FF:000001">
    <property type="entry name" value="High frequency lysogenization protein HflD homolog"/>
    <property type="match status" value="1"/>
</dbReference>
<dbReference type="Gene3D" id="1.10.3890.10">
    <property type="entry name" value="HflD-like"/>
    <property type="match status" value="1"/>
</dbReference>
<dbReference type="HAMAP" id="MF_00695">
    <property type="entry name" value="HflD_protein"/>
    <property type="match status" value="1"/>
</dbReference>
<dbReference type="InterPro" id="IPR007451">
    <property type="entry name" value="HflD"/>
</dbReference>
<dbReference type="InterPro" id="IPR035932">
    <property type="entry name" value="HflD-like_sf"/>
</dbReference>
<dbReference type="NCBIfam" id="NF001245">
    <property type="entry name" value="PRK00218.1-1"/>
    <property type="match status" value="1"/>
</dbReference>
<dbReference type="NCBIfam" id="NF001246">
    <property type="entry name" value="PRK00218.1-2"/>
    <property type="match status" value="1"/>
</dbReference>
<dbReference type="NCBIfam" id="NF001248">
    <property type="entry name" value="PRK00218.1-4"/>
    <property type="match status" value="1"/>
</dbReference>
<dbReference type="NCBIfam" id="NF001249">
    <property type="entry name" value="PRK00218.1-5"/>
    <property type="match status" value="1"/>
</dbReference>
<dbReference type="PANTHER" id="PTHR38100">
    <property type="entry name" value="HIGH FREQUENCY LYSOGENIZATION PROTEIN HFLD"/>
    <property type="match status" value="1"/>
</dbReference>
<dbReference type="PANTHER" id="PTHR38100:SF1">
    <property type="entry name" value="HIGH FREQUENCY LYSOGENIZATION PROTEIN HFLD"/>
    <property type="match status" value="1"/>
</dbReference>
<dbReference type="Pfam" id="PF04356">
    <property type="entry name" value="DUF489"/>
    <property type="match status" value="1"/>
</dbReference>
<dbReference type="SUPFAM" id="SSF101322">
    <property type="entry name" value="YcfC-like"/>
    <property type="match status" value="1"/>
</dbReference>
<comment type="subcellular location">
    <subcellularLocation>
        <location>Cytoplasm</location>
    </subcellularLocation>
    <subcellularLocation>
        <location evidence="1">Cell inner membrane</location>
        <topology evidence="1">Peripheral membrane protein</topology>
        <orientation evidence="1">Cytoplasmic side</orientation>
    </subcellularLocation>
</comment>
<comment type="similarity">
    <text evidence="1">Belongs to the HflD family.</text>
</comment>
<feature type="chain" id="PRO_1000062049" description="High frequency lysogenization protein HflD homolog">
    <location>
        <begin position="1"/>
        <end position="213"/>
    </location>
</feature>
<accession>A6T7K2</accession>
<sequence length="213" mass="22936">MAKNYYDITLALAGVCQAARLVQQLAHQGHCDSDALHVSLNSIIDLDPESTLAVFGGSEANLRLGLETLLGVLNTSSRQGLNAELTRYTLSLMVLERKLAASKGAMDTLGNRIAGLHRQLEHFDLQSETLLSAMAGIYVDVISPLGPRIQVTGSPAVLQSPQVQAKVRSALLAGIRAAVLWHQVGGGRLQLMFSRNRLVNQAKQILAHLTPEL</sequence>
<organism>
    <name type="scientific">Klebsiella pneumoniae subsp. pneumoniae (strain ATCC 700721 / MGH 78578)</name>
    <dbReference type="NCBI Taxonomy" id="272620"/>
    <lineage>
        <taxon>Bacteria</taxon>
        <taxon>Pseudomonadati</taxon>
        <taxon>Pseudomonadota</taxon>
        <taxon>Gammaproteobacteria</taxon>
        <taxon>Enterobacterales</taxon>
        <taxon>Enterobacteriaceae</taxon>
        <taxon>Klebsiella/Raoultella group</taxon>
        <taxon>Klebsiella</taxon>
        <taxon>Klebsiella pneumoniae complex</taxon>
    </lineage>
</organism>